<proteinExistence type="evidence at protein level"/>
<reference key="1">
    <citation type="journal article" date="2003" name="Science">
        <title>Role of mobile DNA in the evolution of vancomycin-resistant Enterococcus faecalis.</title>
        <authorList>
            <person name="Paulsen I.T."/>
            <person name="Banerjei L."/>
            <person name="Myers G.S.A."/>
            <person name="Nelson K.E."/>
            <person name="Seshadri R."/>
            <person name="Read T.D."/>
            <person name="Fouts D.E."/>
            <person name="Eisen J.A."/>
            <person name="Gill S.R."/>
            <person name="Heidelberg J.F."/>
            <person name="Tettelin H."/>
            <person name="Dodson R.J."/>
            <person name="Umayam L.A."/>
            <person name="Brinkac L.M."/>
            <person name="Beanan M.J."/>
            <person name="Daugherty S.C."/>
            <person name="DeBoy R.T."/>
            <person name="Durkin S.A."/>
            <person name="Kolonay J.F."/>
            <person name="Madupu R."/>
            <person name="Nelson W.C."/>
            <person name="Vamathevan J.J."/>
            <person name="Tran B."/>
            <person name="Upton J."/>
            <person name="Hansen T."/>
            <person name="Shetty J."/>
            <person name="Khouri H.M."/>
            <person name="Utterback T.R."/>
            <person name="Radune D."/>
            <person name="Ketchum K.A."/>
            <person name="Dougherty B.A."/>
            <person name="Fraser C.M."/>
        </authorList>
    </citation>
    <scope>NUCLEOTIDE SEQUENCE [LARGE SCALE GENOMIC DNA]</scope>
    <source>
        <strain>ATCC 700802 / V583</strain>
    </source>
</reference>
<reference key="2">
    <citation type="submission" date="2009-02" db="PDB data bank">
        <title>Crystal structure of 4-methyl-5-(beta-hydroxyethyl)thiazole kinase (np_816404.1) from Enterococcus faecalis V583 at 2.57 A resolution.</title>
        <authorList>
            <consortium name="Joint center for structural genomics (JCSG)"/>
        </authorList>
    </citation>
    <scope>X-RAY CRYSTALLOGRAPHY (2.57 ANGSTROMS)</scope>
    <source>
        <strain>ATCC 700802 / V583</strain>
    </source>
</reference>
<protein>
    <recommendedName>
        <fullName evidence="1">Hydroxyethylthiazole kinase</fullName>
        <ecNumber evidence="1">2.7.1.50</ecNumber>
    </recommendedName>
    <alternativeName>
        <fullName evidence="1">4-methyl-5-beta-hydroxyethylthiazole kinase</fullName>
        <shortName evidence="1">TH kinase</shortName>
        <shortName evidence="1">Thz kinase</shortName>
    </alternativeName>
</protein>
<organism>
    <name type="scientific">Enterococcus faecalis (strain ATCC 700802 / V583)</name>
    <dbReference type="NCBI Taxonomy" id="226185"/>
    <lineage>
        <taxon>Bacteria</taxon>
        <taxon>Bacillati</taxon>
        <taxon>Bacillota</taxon>
        <taxon>Bacilli</taxon>
        <taxon>Lactobacillales</taxon>
        <taxon>Enterococcaceae</taxon>
        <taxon>Enterococcus</taxon>
    </lineage>
</organism>
<dbReference type="EC" id="2.7.1.50" evidence="1"/>
<dbReference type="EMBL" id="AE016830">
    <property type="protein sequence ID" value="AAO82474.1"/>
    <property type="molecule type" value="Genomic_DNA"/>
</dbReference>
<dbReference type="RefSeq" id="NP_816404.1">
    <property type="nucleotide sequence ID" value="NC_004668.1"/>
</dbReference>
<dbReference type="RefSeq" id="WP_002387209.1">
    <property type="nucleotide sequence ID" value="NZ_KE136528.1"/>
</dbReference>
<dbReference type="PDB" id="3DZV">
    <property type="method" value="X-ray"/>
    <property type="resolution" value="2.57 A"/>
    <property type="chains" value="A/B=1-272"/>
</dbReference>
<dbReference type="PDBsum" id="3DZV"/>
<dbReference type="SMR" id="Q830K4"/>
<dbReference type="STRING" id="226185.EF_2777"/>
<dbReference type="DNASU" id="1201627"/>
<dbReference type="EnsemblBacteria" id="AAO82474">
    <property type="protein sequence ID" value="AAO82474"/>
    <property type="gene ID" value="EF_2777"/>
</dbReference>
<dbReference type="KEGG" id="efa:EF2777"/>
<dbReference type="PATRIC" id="fig|226185.45.peg.793"/>
<dbReference type="eggNOG" id="COG2145">
    <property type="taxonomic scope" value="Bacteria"/>
</dbReference>
<dbReference type="HOGENOM" id="CLU_019943_0_0_9"/>
<dbReference type="UniPathway" id="UPA00060">
    <property type="reaction ID" value="UER00139"/>
</dbReference>
<dbReference type="EvolutionaryTrace" id="Q830K4"/>
<dbReference type="Proteomes" id="UP000001415">
    <property type="component" value="Chromosome"/>
</dbReference>
<dbReference type="GO" id="GO:0005524">
    <property type="term" value="F:ATP binding"/>
    <property type="evidence" value="ECO:0007669"/>
    <property type="project" value="UniProtKB-UniRule"/>
</dbReference>
<dbReference type="GO" id="GO:0004417">
    <property type="term" value="F:hydroxyethylthiazole kinase activity"/>
    <property type="evidence" value="ECO:0007669"/>
    <property type="project" value="UniProtKB-UniRule"/>
</dbReference>
<dbReference type="GO" id="GO:0000287">
    <property type="term" value="F:magnesium ion binding"/>
    <property type="evidence" value="ECO:0007669"/>
    <property type="project" value="UniProtKB-UniRule"/>
</dbReference>
<dbReference type="GO" id="GO:0009228">
    <property type="term" value="P:thiamine biosynthetic process"/>
    <property type="evidence" value="ECO:0007669"/>
    <property type="project" value="UniProtKB-KW"/>
</dbReference>
<dbReference type="GO" id="GO:0009229">
    <property type="term" value="P:thiamine diphosphate biosynthetic process"/>
    <property type="evidence" value="ECO:0007669"/>
    <property type="project" value="UniProtKB-UniRule"/>
</dbReference>
<dbReference type="CDD" id="cd01170">
    <property type="entry name" value="THZ_kinase"/>
    <property type="match status" value="1"/>
</dbReference>
<dbReference type="Gene3D" id="3.40.1190.20">
    <property type="match status" value="1"/>
</dbReference>
<dbReference type="HAMAP" id="MF_00228">
    <property type="entry name" value="Thz_kinase"/>
    <property type="match status" value="1"/>
</dbReference>
<dbReference type="InterPro" id="IPR000417">
    <property type="entry name" value="Hyethyz_kinase"/>
</dbReference>
<dbReference type="InterPro" id="IPR029056">
    <property type="entry name" value="Ribokinase-like"/>
</dbReference>
<dbReference type="Pfam" id="PF02110">
    <property type="entry name" value="HK"/>
    <property type="match status" value="1"/>
</dbReference>
<dbReference type="PIRSF" id="PIRSF000513">
    <property type="entry name" value="Thz_kinase"/>
    <property type="match status" value="1"/>
</dbReference>
<dbReference type="PRINTS" id="PR01099">
    <property type="entry name" value="HYETHTZKNASE"/>
</dbReference>
<dbReference type="SUPFAM" id="SSF53613">
    <property type="entry name" value="Ribokinase-like"/>
    <property type="match status" value="1"/>
</dbReference>
<keyword id="KW-0002">3D-structure</keyword>
<keyword id="KW-0067">ATP-binding</keyword>
<keyword id="KW-0418">Kinase</keyword>
<keyword id="KW-0460">Magnesium</keyword>
<keyword id="KW-0479">Metal-binding</keyword>
<keyword id="KW-0547">Nucleotide-binding</keyword>
<keyword id="KW-1185">Reference proteome</keyword>
<keyword id="KW-0784">Thiamine biosynthesis</keyword>
<keyword id="KW-0808">Transferase</keyword>
<evidence type="ECO:0000255" key="1">
    <source>
        <dbReference type="HAMAP-Rule" id="MF_00228"/>
    </source>
</evidence>
<evidence type="ECO:0007829" key="2">
    <source>
        <dbReference type="PDB" id="3DZV"/>
    </source>
</evidence>
<sequence length="272" mass="29719">MKTSVKFETIFPLTTAPLIQCITNEITCESMANALLYIDAKPIMADDPREFPQMFQQTSALVLNLGHLSQEREQSLLAASDYARQVNKLTVVDLVGYGASDIRNEVGEKLVHNQPTVVKGNLSEMRTFCQLVSHGRGVDGSPLDQSEEAIEELIQALRQQTQKFPQTVFLATGIQDVLVSQEQVIVLQNGVPELDCFTGTGDLVGALVAALLGEGNAPMTAAVAAVSYFNLCGEKAKTKSQGLADFRQNTLNQLSLLMKEKDWFEAVKGRVL</sequence>
<feature type="chain" id="PRO_0000383858" description="Hydroxyethylthiazole kinase">
    <location>
        <begin position="1"/>
        <end position="272"/>
    </location>
</feature>
<feature type="binding site" evidence="1">
    <location>
        <position position="44"/>
    </location>
    <ligand>
        <name>substrate</name>
    </ligand>
</feature>
<feature type="binding site" evidence="1">
    <location>
        <position position="119"/>
    </location>
    <ligand>
        <name>ATP</name>
        <dbReference type="ChEBI" id="CHEBI:30616"/>
    </ligand>
</feature>
<feature type="binding site" evidence="1">
    <location>
        <position position="172"/>
    </location>
    <ligand>
        <name>ATP</name>
        <dbReference type="ChEBI" id="CHEBI:30616"/>
    </ligand>
</feature>
<feature type="binding site" evidence="1">
    <location>
        <position position="199"/>
    </location>
    <ligand>
        <name>substrate</name>
    </ligand>
</feature>
<feature type="helix" evidence="2">
    <location>
        <begin position="7"/>
        <end position="9"/>
    </location>
</feature>
<feature type="strand" evidence="2">
    <location>
        <begin position="18"/>
        <end position="22"/>
    </location>
</feature>
<feature type="turn" evidence="2">
    <location>
        <begin position="25"/>
        <end position="27"/>
    </location>
</feature>
<feature type="helix" evidence="2">
    <location>
        <begin position="28"/>
        <end position="37"/>
    </location>
</feature>
<feature type="strand" evidence="2">
    <location>
        <begin position="41"/>
        <end position="43"/>
    </location>
</feature>
<feature type="helix" evidence="2">
    <location>
        <begin position="48"/>
        <end position="50"/>
    </location>
</feature>
<feature type="helix" evidence="2">
    <location>
        <begin position="51"/>
        <end position="55"/>
    </location>
</feature>
<feature type="strand" evidence="2">
    <location>
        <begin position="59"/>
        <end position="64"/>
    </location>
</feature>
<feature type="helix" evidence="2">
    <location>
        <begin position="70"/>
        <end position="85"/>
    </location>
</feature>
<feature type="strand" evidence="2">
    <location>
        <begin position="90"/>
        <end position="93"/>
    </location>
</feature>
<feature type="turn" evidence="2">
    <location>
        <begin position="95"/>
        <end position="98"/>
    </location>
</feature>
<feature type="helix" evidence="2">
    <location>
        <begin position="101"/>
        <end position="112"/>
    </location>
</feature>
<feature type="strand" evidence="2">
    <location>
        <begin position="116"/>
        <end position="121"/>
    </location>
</feature>
<feature type="helix" evidence="2">
    <location>
        <begin position="122"/>
        <end position="128"/>
    </location>
</feature>
<feature type="helix" evidence="2">
    <location>
        <begin position="143"/>
        <end position="145"/>
    </location>
</feature>
<feature type="helix" evidence="2">
    <location>
        <begin position="147"/>
        <end position="163"/>
    </location>
</feature>
<feature type="strand" evidence="2">
    <location>
        <begin position="168"/>
        <end position="179"/>
    </location>
</feature>
<feature type="strand" evidence="2">
    <location>
        <begin position="184"/>
        <end position="187"/>
    </location>
</feature>
<feature type="helix" evidence="2">
    <location>
        <begin position="192"/>
        <end position="195"/>
    </location>
</feature>
<feature type="helix" evidence="2">
    <location>
        <begin position="200"/>
        <end position="214"/>
    </location>
</feature>
<feature type="helix" evidence="2">
    <location>
        <begin position="218"/>
        <end position="239"/>
    </location>
</feature>
<feature type="helix" evidence="2">
    <location>
        <begin position="243"/>
        <end position="256"/>
    </location>
</feature>
<feature type="helix" evidence="2">
    <location>
        <begin position="257"/>
        <end position="259"/>
    </location>
</feature>
<feature type="helix" evidence="2">
    <location>
        <begin position="263"/>
        <end position="266"/>
    </location>
</feature>
<feature type="strand" evidence="2">
    <location>
        <begin position="269"/>
        <end position="272"/>
    </location>
</feature>
<comment type="function">
    <text evidence="1">Catalyzes the phosphorylation of the hydroxyl group of 4-methyl-5-beta-hydroxyethylthiazole (THZ).</text>
</comment>
<comment type="catalytic activity">
    <reaction evidence="1">
        <text>5-(2-hydroxyethyl)-4-methylthiazole + ATP = 4-methyl-5-(2-phosphooxyethyl)-thiazole + ADP + H(+)</text>
        <dbReference type="Rhea" id="RHEA:24212"/>
        <dbReference type="ChEBI" id="CHEBI:15378"/>
        <dbReference type="ChEBI" id="CHEBI:17957"/>
        <dbReference type="ChEBI" id="CHEBI:30616"/>
        <dbReference type="ChEBI" id="CHEBI:58296"/>
        <dbReference type="ChEBI" id="CHEBI:456216"/>
        <dbReference type="EC" id="2.7.1.50"/>
    </reaction>
</comment>
<comment type="cofactor">
    <cofactor evidence="1">
        <name>Mg(2+)</name>
        <dbReference type="ChEBI" id="CHEBI:18420"/>
    </cofactor>
</comment>
<comment type="pathway">
    <text evidence="1">Cofactor biosynthesis; thiamine diphosphate biosynthesis; 4-methyl-5-(2-phosphoethyl)-thiazole from 5-(2-hydroxyethyl)-4-methylthiazole: step 1/1.</text>
</comment>
<comment type="similarity">
    <text evidence="1">Belongs to the Thz kinase family.</text>
</comment>
<accession>Q830K4</accession>
<gene>
    <name evidence="1" type="primary">thiM</name>
    <name type="ordered locus">EF_2777</name>
</gene>
<name>THIM_ENTFA</name>